<comment type="function">
    <text evidence="1">Catalyzes the condensation of pantoate with beta-alanine in an ATP-dependent reaction via a pantoyl-adenylate intermediate.</text>
</comment>
<comment type="catalytic activity">
    <reaction evidence="1">
        <text>(R)-pantoate + beta-alanine + ATP = (R)-pantothenate + AMP + diphosphate + H(+)</text>
        <dbReference type="Rhea" id="RHEA:10912"/>
        <dbReference type="ChEBI" id="CHEBI:15378"/>
        <dbReference type="ChEBI" id="CHEBI:15980"/>
        <dbReference type="ChEBI" id="CHEBI:29032"/>
        <dbReference type="ChEBI" id="CHEBI:30616"/>
        <dbReference type="ChEBI" id="CHEBI:33019"/>
        <dbReference type="ChEBI" id="CHEBI:57966"/>
        <dbReference type="ChEBI" id="CHEBI:456215"/>
        <dbReference type="EC" id="6.3.2.1"/>
    </reaction>
</comment>
<comment type="pathway">
    <text evidence="1">Cofactor biosynthesis; (R)-pantothenate biosynthesis; (R)-pantothenate from (R)-pantoate and beta-alanine: step 1/1.</text>
</comment>
<comment type="subunit">
    <text evidence="1">Homodimer.</text>
</comment>
<comment type="subcellular location">
    <subcellularLocation>
        <location evidence="1">Cytoplasm</location>
    </subcellularLocation>
</comment>
<comment type="miscellaneous">
    <text evidence="1">The reaction proceeds by a bi uni uni bi ping pong mechanism.</text>
</comment>
<comment type="similarity">
    <text evidence="1">Belongs to the pantothenate synthetase family.</text>
</comment>
<protein>
    <recommendedName>
        <fullName evidence="1">Pantothenate synthetase</fullName>
        <shortName evidence="1">PS</shortName>
        <ecNumber evidence="1">6.3.2.1</ecNumber>
    </recommendedName>
    <alternativeName>
        <fullName evidence="1">Pantoate--beta-alanine ligase</fullName>
    </alternativeName>
    <alternativeName>
        <fullName evidence="1">Pantoate-activating enzyme</fullName>
    </alternativeName>
</protein>
<organism>
    <name type="scientific">Pseudomonas putida (strain GB-1)</name>
    <dbReference type="NCBI Taxonomy" id="76869"/>
    <lineage>
        <taxon>Bacteria</taxon>
        <taxon>Pseudomonadati</taxon>
        <taxon>Pseudomonadota</taxon>
        <taxon>Gammaproteobacteria</taxon>
        <taxon>Pseudomonadales</taxon>
        <taxon>Pseudomonadaceae</taxon>
        <taxon>Pseudomonas</taxon>
    </lineage>
</organism>
<feature type="chain" id="PRO_1000097094" description="Pantothenate synthetase">
    <location>
        <begin position="1"/>
        <end position="287"/>
    </location>
</feature>
<feature type="active site" description="Proton donor" evidence="1">
    <location>
        <position position="37"/>
    </location>
</feature>
<feature type="binding site" evidence="1">
    <location>
        <begin position="30"/>
        <end position="37"/>
    </location>
    <ligand>
        <name>ATP</name>
        <dbReference type="ChEBI" id="CHEBI:30616"/>
    </ligand>
</feature>
<feature type="binding site" evidence="1">
    <location>
        <position position="61"/>
    </location>
    <ligand>
        <name>(R)-pantoate</name>
        <dbReference type="ChEBI" id="CHEBI:15980"/>
    </ligand>
</feature>
<feature type="binding site" evidence="1">
    <location>
        <position position="61"/>
    </location>
    <ligand>
        <name>beta-alanine</name>
        <dbReference type="ChEBI" id="CHEBI:57966"/>
    </ligand>
</feature>
<feature type="binding site" evidence="1">
    <location>
        <begin position="149"/>
        <end position="152"/>
    </location>
    <ligand>
        <name>ATP</name>
        <dbReference type="ChEBI" id="CHEBI:30616"/>
    </ligand>
</feature>
<feature type="binding site" evidence="1">
    <location>
        <position position="155"/>
    </location>
    <ligand>
        <name>(R)-pantoate</name>
        <dbReference type="ChEBI" id="CHEBI:15980"/>
    </ligand>
</feature>
<feature type="binding site" evidence="1">
    <location>
        <position position="178"/>
    </location>
    <ligand>
        <name>ATP</name>
        <dbReference type="ChEBI" id="CHEBI:30616"/>
    </ligand>
</feature>
<feature type="binding site" evidence="1">
    <location>
        <begin position="186"/>
        <end position="189"/>
    </location>
    <ligand>
        <name>ATP</name>
        <dbReference type="ChEBI" id="CHEBI:30616"/>
    </ligand>
</feature>
<name>PANC_PSEPG</name>
<evidence type="ECO:0000255" key="1">
    <source>
        <dbReference type="HAMAP-Rule" id="MF_00158"/>
    </source>
</evidence>
<sequence>MNTVKTVRELRAAVARARGEGKRIGFVPTMGNLHSGHAALVTKAAQRADFVVASIFVNPLQFGANEDLDKYPRTLAADQERLLQAGCNLLFAPAVEEMYPDGMSVQTRVSVPQLSEGLCGASRPGHFEGVATVVSKLFNMVQPDLAVFGEKDFQQLAVIRAMVRDLNMPIQIIGEPTVRADDGLALSSRNGYLTPEQRTAAPALYRTLQHIAAGIGRGQRDFAALVAEGQAQLSAAGFRPDYLEVRHAVSLRPALIDDRDLVVIAAAYLGNTRLIDNLYLHLEEKTA</sequence>
<gene>
    <name evidence="1" type="primary">panC</name>
    <name type="ordered locus">PputGB1_4699</name>
</gene>
<dbReference type="EC" id="6.3.2.1" evidence="1"/>
<dbReference type="EMBL" id="CP000926">
    <property type="protein sequence ID" value="ABZ00586.1"/>
    <property type="molecule type" value="Genomic_DNA"/>
</dbReference>
<dbReference type="RefSeq" id="WP_012274231.1">
    <property type="nucleotide sequence ID" value="NC_010322.1"/>
</dbReference>
<dbReference type="SMR" id="B0KHW5"/>
<dbReference type="KEGG" id="ppg:PputGB1_4699"/>
<dbReference type="eggNOG" id="COG0414">
    <property type="taxonomic scope" value="Bacteria"/>
</dbReference>
<dbReference type="HOGENOM" id="CLU_047148_0_0_6"/>
<dbReference type="UniPathway" id="UPA00028">
    <property type="reaction ID" value="UER00005"/>
</dbReference>
<dbReference type="Proteomes" id="UP000002157">
    <property type="component" value="Chromosome"/>
</dbReference>
<dbReference type="GO" id="GO:0005829">
    <property type="term" value="C:cytosol"/>
    <property type="evidence" value="ECO:0007669"/>
    <property type="project" value="TreeGrafter"/>
</dbReference>
<dbReference type="GO" id="GO:0005524">
    <property type="term" value="F:ATP binding"/>
    <property type="evidence" value="ECO:0007669"/>
    <property type="project" value="UniProtKB-KW"/>
</dbReference>
<dbReference type="GO" id="GO:0004592">
    <property type="term" value="F:pantoate-beta-alanine ligase activity"/>
    <property type="evidence" value="ECO:0007669"/>
    <property type="project" value="UniProtKB-UniRule"/>
</dbReference>
<dbReference type="GO" id="GO:0015940">
    <property type="term" value="P:pantothenate biosynthetic process"/>
    <property type="evidence" value="ECO:0007669"/>
    <property type="project" value="UniProtKB-UniRule"/>
</dbReference>
<dbReference type="CDD" id="cd00560">
    <property type="entry name" value="PanC"/>
    <property type="match status" value="1"/>
</dbReference>
<dbReference type="FunFam" id="3.30.1300.10:FF:000001">
    <property type="entry name" value="Pantothenate synthetase"/>
    <property type="match status" value="1"/>
</dbReference>
<dbReference type="FunFam" id="3.40.50.620:FF:000013">
    <property type="entry name" value="Pantothenate synthetase"/>
    <property type="match status" value="1"/>
</dbReference>
<dbReference type="Gene3D" id="3.40.50.620">
    <property type="entry name" value="HUPs"/>
    <property type="match status" value="1"/>
</dbReference>
<dbReference type="Gene3D" id="3.30.1300.10">
    <property type="entry name" value="Pantoate-beta-alanine ligase, C-terminal domain"/>
    <property type="match status" value="1"/>
</dbReference>
<dbReference type="HAMAP" id="MF_00158">
    <property type="entry name" value="PanC"/>
    <property type="match status" value="1"/>
</dbReference>
<dbReference type="InterPro" id="IPR003721">
    <property type="entry name" value="Pantoate_ligase"/>
</dbReference>
<dbReference type="InterPro" id="IPR042176">
    <property type="entry name" value="Pantoate_ligase_C"/>
</dbReference>
<dbReference type="InterPro" id="IPR014729">
    <property type="entry name" value="Rossmann-like_a/b/a_fold"/>
</dbReference>
<dbReference type="NCBIfam" id="TIGR00018">
    <property type="entry name" value="panC"/>
    <property type="match status" value="1"/>
</dbReference>
<dbReference type="PANTHER" id="PTHR21299">
    <property type="entry name" value="CYTIDYLATE KINASE/PANTOATE-BETA-ALANINE LIGASE"/>
    <property type="match status" value="1"/>
</dbReference>
<dbReference type="PANTHER" id="PTHR21299:SF1">
    <property type="entry name" value="PANTOATE--BETA-ALANINE LIGASE"/>
    <property type="match status" value="1"/>
</dbReference>
<dbReference type="Pfam" id="PF02569">
    <property type="entry name" value="Pantoate_ligase"/>
    <property type="match status" value="1"/>
</dbReference>
<dbReference type="SUPFAM" id="SSF52374">
    <property type="entry name" value="Nucleotidylyl transferase"/>
    <property type="match status" value="1"/>
</dbReference>
<reference key="1">
    <citation type="submission" date="2008-01" db="EMBL/GenBank/DDBJ databases">
        <title>Complete sequence of Pseudomonas putida GB-1.</title>
        <authorList>
            <consortium name="US DOE Joint Genome Institute"/>
            <person name="Copeland A."/>
            <person name="Lucas S."/>
            <person name="Lapidus A."/>
            <person name="Barry K."/>
            <person name="Glavina del Rio T."/>
            <person name="Dalin E."/>
            <person name="Tice H."/>
            <person name="Pitluck S."/>
            <person name="Bruce D."/>
            <person name="Goodwin L."/>
            <person name="Chertkov O."/>
            <person name="Brettin T."/>
            <person name="Detter J.C."/>
            <person name="Han C."/>
            <person name="Kuske C.R."/>
            <person name="Schmutz J."/>
            <person name="Larimer F."/>
            <person name="Land M."/>
            <person name="Hauser L."/>
            <person name="Kyrpides N."/>
            <person name="Kim E."/>
            <person name="McCarthy J.K."/>
            <person name="Richardson P."/>
        </authorList>
    </citation>
    <scope>NUCLEOTIDE SEQUENCE [LARGE SCALE GENOMIC DNA]</scope>
    <source>
        <strain>GB-1</strain>
    </source>
</reference>
<keyword id="KW-0067">ATP-binding</keyword>
<keyword id="KW-0963">Cytoplasm</keyword>
<keyword id="KW-0436">Ligase</keyword>
<keyword id="KW-0547">Nucleotide-binding</keyword>
<keyword id="KW-0566">Pantothenate biosynthesis</keyword>
<accession>B0KHW5</accession>
<proteinExistence type="inferred from homology"/>